<evidence type="ECO:0000255" key="1">
    <source>
        <dbReference type="HAMAP-Rule" id="MF_01114"/>
    </source>
</evidence>
<name>RECX_TREPS</name>
<sequence length="164" mass="18874">MGTRPTDEQYGAVCFACRCYEAECVAVRLLARSETSAQQLGFKLLKRGFEKRVVESVFPVLKRYSWLDDTRFARAWLRNRVDSRPASRAQLLGELKRRGVSHADAEGALDLLFQEQDEETLCLRLLEKLRRRGYGPHTLQRALQRRQFSPSLVRRCLAVETEGA</sequence>
<keyword id="KW-0963">Cytoplasm</keyword>
<comment type="function">
    <text evidence="1">Modulates RecA activity.</text>
</comment>
<comment type="subcellular location">
    <subcellularLocation>
        <location evidence="1">Cytoplasm</location>
    </subcellularLocation>
</comment>
<comment type="similarity">
    <text evidence="1">Belongs to the RecX family.</text>
</comment>
<gene>
    <name evidence="1" type="primary">recX</name>
    <name type="ordered locus">TPASS_1023</name>
</gene>
<feature type="chain" id="PRO_1000137203" description="Regulatory protein RecX">
    <location>
        <begin position="1"/>
        <end position="164"/>
    </location>
</feature>
<proteinExistence type="inferred from homology"/>
<dbReference type="EMBL" id="CP000805">
    <property type="protein sequence ID" value="ACD71439.1"/>
    <property type="molecule type" value="Genomic_DNA"/>
</dbReference>
<dbReference type="SMR" id="B2S4R0"/>
<dbReference type="KEGG" id="tpp:TPASS_1023"/>
<dbReference type="PATRIC" id="fig|455434.6.peg.1012"/>
<dbReference type="Proteomes" id="UP000001202">
    <property type="component" value="Chromosome"/>
</dbReference>
<dbReference type="GO" id="GO:0005737">
    <property type="term" value="C:cytoplasm"/>
    <property type="evidence" value="ECO:0007669"/>
    <property type="project" value="UniProtKB-SubCell"/>
</dbReference>
<dbReference type="GO" id="GO:0006282">
    <property type="term" value="P:regulation of DNA repair"/>
    <property type="evidence" value="ECO:0007669"/>
    <property type="project" value="UniProtKB-UniRule"/>
</dbReference>
<dbReference type="Gene3D" id="1.10.10.10">
    <property type="entry name" value="Winged helix-like DNA-binding domain superfamily/Winged helix DNA-binding domain"/>
    <property type="match status" value="2"/>
</dbReference>
<dbReference type="HAMAP" id="MF_01114">
    <property type="entry name" value="RecX"/>
    <property type="match status" value="1"/>
</dbReference>
<dbReference type="InterPro" id="IPR053924">
    <property type="entry name" value="RecX_HTH_2nd"/>
</dbReference>
<dbReference type="InterPro" id="IPR003783">
    <property type="entry name" value="Regulatory_RecX"/>
</dbReference>
<dbReference type="InterPro" id="IPR036388">
    <property type="entry name" value="WH-like_DNA-bd_sf"/>
</dbReference>
<dbReference type="NCBIfam" id="NF001062">
    <property type="entry name" value="PRK00117.5-2"/>
    <property type="match status" value="1"/>
</dbReference>
<dbReference type="PANTHER" id="PTHR33602">
    <property type="entry name" value="REGULATORY PROTEIN RECX FAMILY PROTEIN"/>
    <property type="match status" value="1"/>
</dbReference>
<dbReference type="PANTHER" id="PTHR33602:SF1">
    <property type="entry name" value="REGULATORY PROTEIN RECX FAMILY PROTEIN"/>
    <property type="match status" value="1"/>
</dbReference>
<dbReference type="Pfam" id="PF02631">
    <property type="entry name" value="RecX_HTH2"/>
    <property type="match status" value="1"/>
</dbReference>
<protein>
    <recommendedName>
        <fullName evidence="1">Regulatory protein RecX</fullName>
    </recommendedName>
</protein>
<organism>
    <name type="scientific">Treponema pallidum subsp. pallidum (strain SS14)</name>
    <dbReference type="NCBI Taxonomy" id="455434"/>
    <lineage>
        <taxon>Bacteria</taxon>
        <taxon>Pseudomonadati</taxon>
        <taxon>Spirochaetota</taxon>
        <taxon>Spirochaetia</taxon>
        <taxon>Spirochaetales</taxon>
        <taxon>Treponemataceae</taxon>
        <taxon>Treponema</taxon>
    </lineage>
</organism>
<accession>B2S4R0</accession>
<reference key="1">
    <citation type="journal article" date="2008" name="BMC Microbiol.">
        <title>Complete genome sequence of Treponema pallidum ssp. pallidum strain SS14 determined with oligonucleotide arrays.</title>
        <authorList>
            <person name="Matejkova P."/>
            <person name="Strouhal M."/>
            <person name="Smajs D."/>
            <person name="Norris S.J."/>
            <person name="Palzkill T."/>
            <person name="Petrosino J.F."/>
            <person name="Sodergren E."/>
            <person name="Norton J.E."/>
            <person name="Singh J."/>
            <person name="Richmond T.A."/>
            <person name="Molla M.N."/>
            <person name="Albert T.J."/>
            <person name="Weinstock G.M."/>
        </authorList>
    </citation>
    <scope>NUCLEOTIDE SEQUENCE [LARGE SCALE GENOMIC DNA]</scope>
    <source>
        <strain>SS14</strain>
    </source>
</reference>